<proteinExistence type="inferred from homology"/>
<gene>
    <name type="primary">ALG2</name>
    <name type="ordered locus">CAALFM_C604030WA</name>
    <name type="ORF">CaO19.1221</name>
    <name type="ORF">CaO19.8808</name>
</gene>
<dbReference type="EC" id="2.4.1.132" evidence="1"/>
<dbReference type="EC" id="2.4.1.257" evidence="1"/>
<dbReference type="EMBL" id="CP017628">
    <property type="protein sequence ID" value="AOW30324.1"/>
    <property type="molecule type" value="Genomic_DNA"/>
</dbReference>
<dbReference type="RefSeq" id="XP_710571.2">
    <property type="nucleotide sequence ID" value="XM_705479.2"/>
</dbReference>
<dbReference type="SMR" id="Q59LF2"/>
<dbReference type="FunCoup" id="Q59LF2">
    <property type="interactions" value="755"/>
</dbReference>
<dbReference type="STRING" id="237561.Q59LF2"/>
<dbReference type="GlyCosmos" id="Q59LF2">
    <property type="glycosylation" value="3 sites, No reported glycans"/>
</dbReference>
<dbReference type="EnsemblFungi" id="C6_04030W_A-T">
    <property type="protein sequence ID" value="C6_04030W_A-T-p1"/>
    <property type="gene ID" value="C6_04030W_A"/>
</dbReference>
<dbReference type="GeneID" id="3647832"/>
<dbReference type="KEGG" id="cal:CAALFM_C604030WA"/>
<dbReference type="CGD" id="CAL0000176395">
    <property type="gene designation" value="ALG2"/>
</dbReference>
<dbReference type="VEuPathDB" id="FungiDB:C6_04030W_A"/>
<dbReference type="eggNOG" id="KOG0853">
    <property type="taxonomic scope" value="Eukaryota"/>
</dbReference>
<dbReference type="HOGENOM" id="CLU_030619_1_0_1"/>
<dbReference type="InParanoid" id="Q59LF2"/>
<dbReference type="OrthoDB" id="448893at2759"/>
<dbReference type="UniPathway" id="UPA00378"/>
<dbReference type="PRO" id="PR:Q59LF2"/>
<dbReference type="Proteomes" id="UP000000559">
    <property type="component" value="Chromosome 6"/>
</dbReference>
<dbReference type="GO" id="GO:0012505">
    <property type="term" value="C:endomembrane system"/>
    <property type="evidence" value="ECO:0000318"/>
    <property type="project" value="GO_Central"/>
</dbReference>
<dbReference type="GO" id="GO:0005789">
    <property type="term" value="C:endoplasmic reticulum membrane"/>
    <property type="evidence" value="ECO:0007669"/>
    <property type="project" value="UniProtKB-SubCell"/>
</dbReference>
<dbReference type="GO" id="GO:0000033">
    <property type="term" value="F:alpha-1,3-mannosyltransferase activity"/>
    <property type="evidence" value="ECO:0000318"/>
    <property type="project" value="GO_Central"/>
</dbReference>
<dbReference type="GO" id="GO:0004378">
    <property type="term" value="F:GDP-Man:Man1GlcNAc2-PP-Dol alpha-1,3-mannosyltransferase activity"/>
    <property type="evidence" value="ECO:0007669"/>
    <property type="project" value="UniProtKB-EC"/>
</dbReference>
<dbReference type="GO" id="GO:0102704">
    <property type="term" value="F:GDP-Man:Man2GlcNAc2-PP-dolichol alpha-1,6-mannosyltransferase activity"/>
    <property type="evidence" value="ECO:0007669"/>
    <property type="project" value="UniProtKB-EC"/>
</dbReference>
<dbReference type="GO" id="GO:0006488">
    <property type="term" value="P:dolichol-linked oligosaccharide biosynthetic process"/>
    <property type="evidence" value="ECO:0000318"/>
    <property type="project" value="GO_Central"/>
</dbReference>
<dbReference type="CDD" id="cd03805">
    <property type="entry name" value="GT4_ALG2-like"/>
    <property type="match status" value="1"/>
</dbReference>
<dbReference type="FunFam" id="3.40.50.2000:FF:000222">
    <property type="entry name" value="Alpha-1,3-mannosyltransferase ALG2"/>
    <property type="match status" value="1"/>
</dbReference>
<dbReference type="FunFam" id="3.40.50.2000:FF:000659">
    <property type="entry name" value="Alpha-1,3/1,6-mannosyltransferase ALG2"/>
    <property type="match status" value="1"/>
</dbReference>
<dbReference type="Gene3D" id="3.40.50.2000">
    <property type="entry name" value="Glycogen Phosphorylase B"/>
    <property type="match status" value="2"/>
</dbReference>
<dbReference type="InterPro" id="IPR027054">
    <property type="entry name" value="ALG2"/>
</dbReference>
<dbReference type="InterPro" id="IPR001296">
    <property type="entry name" value="Glyco_trans_1"/>
</dbReference>
<dbReference type="InterPro" id="IPR028098">
    <property type="entry name" value="Glyco_trans_4-like_N"/>
</dbReference>
<dbReference type="PANTHER" id="PTHR45918">
    <property type="entry name" value="ALPHA-1,3/1,6-MANNOSYLTRANSFERASE ALG2"/>
    <property type="match status" value="1"/>
</dbReference>
<dbReference type="PANTHER" id="PTHR45918:SF1">
    <property type="entry name" value="ALPHA-1,3_1,6-MANNOSYLTRANSFERASE ALG2"/>
    <property type="match status" value="1"/>
</dbReference>
<dbReference type="Pfam" id="PF13439">
    <property type="entry name" value="Glyco_transf_4"/>
    <property type="match status" value="1"/>
</dbReference>
<dbReference type="Pfam" id="PF00534">
    <property type="entry name" value="Glycos_transf_1"/>
    <property type="match status" value="1"/>
</dbReference>
<dbReference type="SUPFAM" id="SSF53756">
    <property type="entry name" value="UDP-Glycosyltransferase/glycogen phosphorylase"/>
    <property type="match status" value="1"/>
</dbReference>
<sequence>MSKRQENKKIAFIHPDLGIGGAERLVVDAAVGLQDFGHDIIIYTSHCDLTHCFEEVSSGQLKVSVHGDSLPTNLFGKLHIFFAILRQFYLVCWLIFTGTIKNYDYFIVDQLSFCIPLLKMFCNSNCQVLFYCHFPDQLLVRRTSFLKKLYRVPFDAIEEYTTGSSDQIVVNSNFTKQIFHDTFKKLNHIDPQVVYPCVDTETIVDTNASSNSEVSKFFKDSPFFLSINRFERSKNIELAIKSFARMNKLMVTKAIKSFARMNKLMVTNKKPRLVIAGGYDSRVAENVEYLAELSTLCDELNLINFTIRGKLIMMPPSVDVLFLPSISTQLKNSLIQQTELLLYTPPREHFGIVPLEAMLAKTPVLAINFGGPLETVVNYNGNNLDEATGYTETGDFTKWSKIIMKHYNLDESTKIKLGENGRNRVINKFSRKKLAQSLDNILN</sequence>
<organism>
    <name type="scientific">Candida albicans (strain SC5314 / ATCC MYA-2876)</name>
    <name type="common">Yeast</name>
    <dbReference type="NCBI Taxonomy" id="237561"/>
    <lineage>
        <taxon>Eukaryota</taxon>
        <taxon>Fungi</taxon>
        <taxon>Dikarya</taxon>
        <taxon>Ascomycota</taxon>
        <taxon>Saccharomycotina</taxon>
        <taxon>Pichiomycetes</taxon>
        <taxon>Debaryomycetaceae</taxon>
        <taxon>Candida/Lodderomyces clade</taxon>
        <taxon>Candida</taxon>
    </lineage>
</organism>
<name>ALG2_CANAL</name>
<feature type="chain" id="PRO_0000080263" description="Alpha-1,3/1,6-mannosyltransferase ALG2">
    <location>
        <begin position="1"/>
        <end position="443"/>
    </location>
</feature>
<feature type="transmembrane region" description="Helical" evidence="2">
    <location>
        <begin position="80"/>
        <end position="100"/>
    </location>
</feature>
<feature type="glycosylation site" description="N-linked (GlcNAc...) asparagine" evidence="2">
    <location>
        <position position="173"/>
    </location>
</feature>
<feature type="glycosylation site" description="N-linked (GlcNAc...) asparagine" evidence="2">
    <location>
        <position position="207"/>
    </location>
</feature>
<feature type="glycosylation site" description="N-linked (GlcNAc...) asparagine" evidence="2">
    <location>
        <position position="304"/>
    </location>
</feature>
<reference key="1">
    <citation type="journal article" date="2004" name="Proc. Natl. Acad. Sci. U.S.A.">
        <title>The diploid genome sequence of Candida albicans.</title>
        <authorList>
            <person name="Jones T."/>
            <person name="Federspiel N.A."/>
            <person name="Chibana H."/>
            <person name="Dungan J."/>
            <person name="Kalman S."/>
            <person name="Magee B.B."/>
            <person name="Newport G."/>
            <person name="Thorstenson Y.R."/>
            <person name="Agabian N."/>
            <person name="Magee P.T."/>
            <person name="Davis R.W."/>
            <person name="Scherer S."/>
        </authorList>
    </citation>
    <scope>NUCLEOTIDE SEQUENCE [LARGE SCALE GENOMIC DNA]</scope>
    <source>
        <strain>SC5314 / ATCC MYA-2876</strain>
    </source>
</reference>
<reference key="2">
    <citation type="journal article" date="2007" name="Genome Biol.">
        <title>Assembly of the Candida albicans genome into sixteen supercontigs aligned on the eight chromosomes.</title>
        <authorList>
            <person name="van het Hoog M."/>
            <person name="Rast T.J."/>
            <person name="Martchenko M."/>
            <person name="Grindle S."/>
            <person name="Dignard D."/>
            <person name="Hogues H."/>
            <person name="Cuomo C."/>
            <person name="Berriman M."/>
            <person name="Scherer S."/>
            <person name="Magee B.B."/>
            <person name="Whiteway M."/>
            <person name="Chibana H."/>
            <person name="Nantel A."/>
            <person name="Magee P.T."/>
        </authorList>
    </citation>
    <scope>GENOME REANNOTATION</scope>
    <source>
        <strain>SC5314 / ATCC MYA-2876</strain>
    </source>
</reference>
<reference key="3">
    <citation type="journal article" date="2013" name="Genome Biol.">
        <title>Assembly of a phased diploid Candida albicans genome facilitates allele-specific measurements and provides a simple model for repeat and indel structure.</title>
        <authorList>
            <person name="Muzzey D."/>
            <person name="Schwartz K."/>
            <person name="Weissman J.S."/>
            <person name="Sherlock G."/>
        </authorList>
    </citation>
    <scope>NUCLEOTIDE SEQUENCE [LARGE SCALE GENOMIC DNA]</scope>
    <scope>GENOME REANNOTATION</scope>
    <source>
        <strain>SC5314 / ATCC MYA-2876</strain>
    </source>
</reference>
<keyword id="KW-0256">Endoplasmic reticulum</keyword>
<keyword id="KW-0325">Glycoprotein</keyword>
<keyword id="KW-0328">Glycosyltransferase</keyword>
<keyword id="KW-0472">Membrane</keyword>
<keyword id="KW-1185">Reference proteome</keyword>
<keyword id="KW-0808">Transferase</keyword>
<keyword id="KW-0812">Transmembrane</keyword>
<keyword id="KW-1133">Transmembrane helix</keyword>
<evidence type="ECO:0000250" key="1">
    <source>
        <dbReference type="UniProtKB" id="P43636"/>
    </source>
</evidence>
<evidence type="ECO:0000255" key="2"/>
<evidence type="ECO:0000305" key="3"/>
<accession>Q59LF2</accession>
<accession>A0A1D8PQB6</accession>
<protein>
    <recommendedName>
        <fullName>Alpha-1,3/1,6-mannosyltransferase ALG2</fullName>
        <ecNumber evidence="1">2.4.1.132</ecNumber>
        <ecNumber evidence="1">2.4.1.257</ecNumber>
    </recommendedName>
    <alternativeName>
        <fullName>Asparagine-linked glycosylation protein 2</fullName>
    </alternativeName>
    <alternativeName>
        <fullName>GDP-Man:Man(1)GlcNAc(2)-PP-Dol alpha-1,3-mannosyltransferase</fullName>
    </alternativeName>
    <alternativeName>
        <fullName>GDP-Man:Man(1)GlcNAc(2)-PP-dolichol mannosyltransferase</fullName>
    </alternativeName>
    <alternativeName>
        <fullName>GDP-Man:Man(2)GlcNAc(2)-PP-Dol alpha-1,6-mannosyltransferase</fullName>
    </alternativeName>
</protein>
<comment type="function">
    <text evidence="1">Mannosylates Man(2)GlcNAc(2)-dolichol diphosphate and Man(1)GlcNAc(2)-dolichol diphosphate to form Man(3)GlcNAc(2)-dolichol diphosphate.</text>
</comment>
<comment type="catalytic activity">
    <reaction evidence="1">
        <text>a beta-D-Man-(1-&gt;4)-beta-D-GlcNAc-(1-&gt;4)-alpha-D-GlcNAc-diphospho-di-trans,poly-cis-dolichol + GDP-alpha-D-mannose = an alpha-D-Man-(1-&gt;3)-beta-D-Man-(1-&gt;4)-beta-D-GlcNAc-(1-&gt;4)-alpha-D-GlcNAc-diphospho-di-trans,poly-cis-dolichol + GDP + H(+)</text>
        <dbReference type="Rhea" id="RHEA:29515"/>
        <dbReference type="Rhea" id="RHEA-COMP:19511"/>
        <dbReference type="Rhea" id="RHEA-COMP:19513"/>
        <dbReference type="ChEBI" id="CHEBI:15378"/>
        <dbReference type="ChEBI" id="CHEBI:57527"/>
        <dbReference type="ChEBI" id="CHEBI:58189"/>
        <dbReference type="ChEBI" id="CHEBI:58472"/>
        <dbReference type="ChEBI" id="CHEBI:132510"/>
        <dbReference type="EC" id="2.4.1.132"/>
    </reaction>
    <physiologicalReaction direction="left-to-right" evidence="1">
        <dbReference type="Rhea" id="RHEA:29516"/>
    </physiologicalReaction>
</comment>
<comment type="catalytic activity">
    <reaction evidence="1">
        <text>an alpha-D-Man-(1-&gt;3)-beta-D-Man-(1-&gt;4)-beta-D-GlcNAc-(1-&gt;4)-alpha-D-GlcNAc-diphospho-di-trans,poly-cis-dolichol + GDP-alpha-D-mannose = an alpha-D-Man-(1-&gt;3)-[alpha-D-Man-(1-&gt;6)]-beta-D-Man-(1-&gt;4)-beta-D-GlcNAc-(1-&gt;4)-alpha-D-GlcNAc-diphospho-di-trans,poly-cis-dolichol + GDP + H(+)</text>
        <dbReference type="Rhea" id="RHEA:29519"/>
        <dbReference type="Rhea" id="RHEA-COMP:19513"/>
        <dbReference type="Rhea" id="RHEA-COMP:19515"/>
        <dbReference type="ChEBI" id="CHEBI:15378"/>
        <dbReference type="ChEBI" id="CHEBI:57527"/>
        <dbReference type="ChEBI" id="CHEBI:58189"/>
        <dbReference type="ChEBI" id="CHEBI:132510"/>
        <dbReference type="ChEBI" id="CHEBI:132511"/>
        <dbReference type="EC" id="2.4.1.257"/>
    </reaction>
    <physiologicalReaction direction="left-to-right" evidence="1">
        <dbReference type="Rhea" id="RHEA:29520"/>
    </physiologicalReaction>
</comment>
<comment type="pathway">
    <text evidence="1">Protein modification; protein glycosylation.</text>
</comment>
<comment type="subcellular location">
    <subcellularLocation>
        <location evidence="1">Endoplasmic reticulum membrane</location>
        <topology evidence="2">Single-pass membrane protein</topology>
    </subcellularLocation>
</comment>
<comment type="similarity">
    <text evidence="3">Belongs to the glycosyltransferase group 1 family.</text>
</comment>